<dbReference type="EMBL" id="X98993">
    <property type="protein sequence ID" value="CAA67434.2"/>
    <property type="molecule type" value="mRNA"/>
</dbReference>
<dbReference type="EMBL" id="BC070915">
    <property type="protein sequence ID" value="AAH70915.1"/>
    <property type="molecule type" value="mRNA"/>
</dbReference>
<dbReference type="RefSeq" id="NP_036831.2">
    <property type="nucleotide sequence ID" value="NM_012699.2"/>
</dbReference>
<dbReference type="RefSeq" id="XP_006240127.1">
    <property type="nucleotide sequence ID" value="XM_006240065.3"/>
</dbReference>
<dbReference type="SMR" id="P97554"/>
<dbReference type="FunCoup" id="P97554">
    <property type="interactions" value="522"/>
</dbReference>
<dbReference type="IntAct" id="P97554">
    <property type="interactions" value="6"/>
</dbReference>
<dbReference type="STRING" id="10116.ENSRNOP00000005363"/>
<dbReference type="PhosphoSitePlus" id="P97554"/>
<dbReference type="PaxDb" id="10116-ENSRNOP00000005363"/>
<dbReference type="Ensembl" id="ENSRNOT00000005363.6">
    <property type="protein sequence ID" value="ENSRNOP00000005363.3"/>
    <property type="gene ID" value="ENSRNOG00000004006.6"/>
</dbReference>
<dbReference type="GeneID" id="24908"/>
<dbReference type="KEGG" id="rno:24908"/>
<dbReference type="UCSC" id="RGD:3070">
    <property type="organism name" value="rat"/>
</dbReference>
<dbReference type="AGR" id="RGD:3070"/>
<dbReference type="CTD" id="4189"/>
<dbReference type="RGD" id="3070">
    <property type="gene designation" value="Dnajb9"/>
</dbReference>
<dbReference type="eggNOG" id="KOG0714">
    <property type="taxonomic scope" value="Eukaryota"/>
</dbReference>
<dbReference type="GeneTree" id="ENSGT00940000156246"/>
<dbReference type="HOGENOM" id="CLU_077239_0_0_1"/>
<dbReference type="InParanoid" id="P97554"/>
<dbReference type="OMA" id="HSQHKRH"/>
<dbReference type="OrthoDB" id="376357at2759"/>
<dbReference type="PhylomeDB" id="P97554"/>
<dbReference type="TreeFam" id="TF105143"/>
<dbReference type="PRO" id="PR:P97554"/>
<dbReference type="Proteomes" id="UP000002494">
    <property type="component" value="Chromosome 6"/>
</dbReference>
<dbReference type="Bgee" id="ENSRNOG00000004006">
    <property type="expression patterns" value="Expressed in testis and 20 other cell types or tissues"/>
</dbReference>
<dbReference type="ExpressionAtlas" id="P97554">
    <property type="expression patterns" value="baseline and differential"/>
</dbReference>
<dbReference type="GO" id="GO:0005737">
    <property type="term" value="C:cytoplasm"/>
    <property type="evidence" value="ECO:0000314"/>
    <property type="project" value="UniProtKB"/>
</dbReference>
<dbReference type="GO" id="GO:0005783">
    <property type="term" value="C:endoplasmic reticulum"/>
    <property type="evidence" value="ECO:0000250"/>
    <property type="project" value="UniProtKB"/>
</dbReference>
<dbReference type="GO" id="GO:0005788">
    <property type="term" value="C:endoplasmic reticulum lumen"/>
    <property type="evidence" value="ECO:0000250"/>
    <property type="project" value="UniProtKB"/>
</dbReference>
<dbReference type="GO" id="GO:0005730">
    <property type="term" value="C:nucleolus"/>
    <property type="evidence" value="ECO:0000314"/>
    <property type="project" value="UniProtKB"/>
</dbReference>
<dbReference type="GO" id="GO:0030544">
    <property type="term" value="F:Hsp70 protein binding"/>
    <property type="evidence" value="ECO:0000266"/>
    <property type="project" value="RGD"/>
</dbReference>
<dbReference type="GO" id="GO:0051787">
    <property type="term" value="F:misfolded protein binding"/>
    <property type="evidence" value="ECO:0000266"/>
    <property type="project" value="RGD"/>
</dbReference>
<dbReference type="GO" id="GO:0051087">
    <property type="term" value="F:protein-folding chaperone binding"/>
    <property type="evidence" value="ECO:0000250"/>
    <property type="project" value="UniProtKB"/>
</dbReference>
<dbReference type="GO" id="GO:0030183">
    <property type="term" value="P:B cell differentiation"/>
    <property type="evidence" value="ECO:0000250"/>
    <property type="project" value="UniProtKB"/>
</dbReference>
<dbReference type="GO" id="GO:0036503">
    <property type="term" value="P:ERAD pathway"/>
    <property type="evidence" value="ECO:0000250"/>
    <property type="project" value="UniProtKB"/>
</dbReference>
<dbReference type="GO" id="GO:1903895">
    <property type="term" value="P:negative regulation of IRE1-mediated unfolded protein response"/>
    <property type="evidence" value="ECO:0000250"/>
    <property type="project" value="UniProtKB"/>
</dbReference>
<dbReference type="GO" id="GO:0002639">
    <property type="term" value="P:positive regulation of immunoglobulin production"/>
    <property type="evidence" value="ECO:0000250"/>
    <property type="project" value="UniProtKB"/>
</dbReference>
<dbReference type="GO" id="GO:0034976">
    <property type="term" value="P:response to endoplasmic reticulum stress"/>
    <property type="evidence" value="ECO:0000250"/>
    <property type="project" value="UniProtKB"/>
</dbReference>
<dbReference type="GO" id="GO:0006986">
    <property type="term" value="P:response to unfolded protein"/>
    <property type="evidence" value="ECO:0007669"/>
    <property type="project" value="UniProtKB-KW"/>
</dbReference>
<dbReference type="CDD" id="cd06257">
    <property type="entry name" value="DnaJ"/>
    <property type="match status" value="1"/>
</dbReference>
<dbReference type="FunFam" id="1.10.287.110:FF:000054">
    <property type="entry name" value="dnaJ homolog subfamily B member 9"/>
    <property type="match status" value="1"/>
</dbReference>
<dbReference type="Gene3D" id="1.10.287.110">
    <property type="entry name" value="DnaJ domain"/>
    <property type="match status" value="1"/>
</dbReference>
<dbReference type="InterPro" id="IPR001623">
    <property type="entry name" value="DnaJ_domain"/>
</dbReference>
<dbReference type="InterPro" id="IPR018253">
    <property type="entry name" value="DnaJ_domain_CS"/>
</dbReference>
<dbReference type="InterPro" id="IPR051948">
    <property type="entry name" value="Hsp70_co-chaperone_J-domain"/>
</dbReference>
<dbReference type="InterPro" id="IPR036869">
    <property type="entry name" value="J_dom_sf"/>
</dbReference>
<dbReference type="PANTHER" id="PTHR44360">
    <property type="entry name" value="DNAJ HOMOLOG SUBFAMILY B MEMBER 9"/>
    <property type="match status" value="1"/>
</dbReference>
<dbReference type="PANTHER" id="PTHR44360:SF1">
    <property type="entry name" value="DNAJ HOMOLOG SUBFAMILY B MEMBER 9"/>
    <property type="match status" value="1"/>
</dbReference>
<dbReference type="Pfam" id="PF00226">
    <property type="entry name" value="DnaJ"/>
    <property type="match status" value="1"/>
</dbReference>
<dbReference type="PRINTS" id="PR00625">
    <property type="entry name" value="JDOMAIN"/>
</dbReference>
<dbReference type="SMART" id="SM00271">
    <property type="entry name" value="DnaJ"/>
    <property type="match status" value="1"/>
</dbReference>
<dbReference type="SUPFAM" id="SSF46565">
    <property type="entry name" value="Chaperone J-domain"/>
    <property type="match status" value="1"/>
</dbReference>
<dbReference type="PROSITE" id="PS00636">
    <property type="entry name" value="DNAJ_1"/>
    <property type="match status" value="1"/>
</dbReference>
<dbReference type="PROSITE" id="PS50076">
    <property type="entry name" value="DNAJ_2"/>
    <property type="match status" value="1"/>
</dbReference>
<evidence type="ECO:0000250" key="1">
    <source>
        <dbReference type="UniProtKB" id="G3H0N9"/>
    </source>
</evidence>
<evidence type="ECO:0000250" key="2">
    <source>
        <dbReference type="UniProtKB" id="Q9QYI6"/>
    </source>
</evidence>
<evidence type="ECO:0000250" key="3">
    <source>
        <dbReference type="UniProtKB" id="Q9UBS3"/>
    </source>
</evidence>
<evidence type="ECO:0000255" key="4"/>
<evidence type="ECO:0000255" key="5">
    <source>
        <dbReference type="PROSITE-ProRule" id="PRU00286"/>
    </source>
</evidence>
<evidence type="ECO:0000303" key="6">
    <source>
    </source>
</evidence>
<evidence type="ECO:0000305" key="7"/>
<evidence type="ECO:0000305" key="8">
    <source>
    </source>
</evidence>
<evidence type="ECO:0000312" key="9">
    <source>
        <dbReference type="RGD" id="3070"/>
    </source>
</evidence>
<reference key="1">
    <citation type="journal article" date="2001" name="Exp. Cell Res.">
        <title>Upregulation of the cochaperone mdg1 in endothelial cells is induced by stress and during in vitro angiogenesis.</title>
        <authorList>
            <person name="Proels F."/>
            <person name="Mayer M.P."/>
            <person name="Renner O."/>
            <person name="Czarnecki P.G."/>
            <person name="Ast M."/>
            <person name="Gaessler C."/>
            <person name="Wilting J."/>
            <person name="Kurz H."/>
            <person name="Christ B."/>
        </authorList>
    </citation>
    <scope>NUCLEOTIDE SEQUENCE [MRNA]</scope>
    <source>
        <tissue>Epididymis</tissue>
    </source>
</reference>
<reference key="2">
    <citation type="journal article" date="2004" name="Genome Res.">
        <title>The status, quality, and expansion of the NIH full-length cDNA project: the Mammalian Gene Collection (MGC).</title>
        <authorList>
            <consortium name="The MGC Project Team"/>
        </authorList>
    </citation>
    <scope>NUCLEOTIDE SEQUENCE [LARGE SCALE MRNA]</scope>
    <source>
        <tissue>Heart</tissue>
    </source>
</reference>
<accession>P97554</accession>
<gene>
    <name evidence="9" type="primary">Dnajb9</name>
    <name evidence="6" type="synonym">Mdg1</name>
</gene>
<name>DNJB9_RAT</name>
<feature type="signal peptide" evidence="4">
    <location>
        <begin position="1"/>
        <end position="23"/>
    </location>
</feature>
<feature type="chain" id="PRO_0000071034" description="DnaJ homolog subfamily B member 9">
    <location>
        <begin position="24"/>
        <end position="222"/>
    </location>
</feature>
<feature type="domain" description="J" evidence="5">
    <location>
        <begin position="26"/>
        <end position="90"/>
    </location>
</feature>
<feature type="region of interest" description="Divergent targeting domain" evidence="2">
    <location>
        <begin position="91"/>
        <end position="222"/>
    </location>
</feature>
<feature type="modified residue" description="Phosphoserine" evidence="3">
    <location>
        <position position="133"/>
    </location>
</feature>
<keyword id="KW-0143">Chaperone</keyword>
<keyword id="KW-0256">Endoplasmic reticulum</keyword>
<keyword id="KW-0597">Phosphoprotein</keyword>
<keyword id="KW-1185">Reference proteome</keyword>
<keyword id="KW-0732">Signal</keyword>
<keyword id="KW-0834">Unfolded protein response</keyword>
<organism>
    <name type="scientific">Rattus norvegicus</name>
    <name type="common">Rat</name>
    <dbReference type="NCBI Taxonomy" id="10116"/>
    <lineage>
        <taxon>Eukaryota</taxon>
        <taxon>Metazoa</taxon>
        <taxon>Chordata</taxon>
        <taxon>Craniata</taxon>
        <taxon>Vertebrata</taxon>
        <taxon>Euteleostomi</taxon>
        <taxon>Mammalia</taxon>
        <taxon>Eutheria</taxon>
        <taxon>Euarchontoglires</taxon>
        <taxon>Glires</taxon>
        <taxon>Rodentia</taxon>
        <taxon>Myomorpha</taxon>
        <taxon>Muroidea</taxon>
        <taxon>Muridae</taxon>
        <taxon>Murinae</taxon>
        <taxon>Rattus</taxon>
    </lineage>
</organism>
<comment type="function">
    <text evidence="1 2">Co-chaperone for Hsp70 protein HSPA5/BiP that acts as a key repressor of the ERN1/IRE1-mediated unfolded protein response (UPR) (By similarity). J domain-containing co-chaperones stimulate the ATPase activity of Hsp70 proteins and are required for efficient substrate recognition by Hsp70 proteins (By similarity). In the unstressed endoplasmic reticulum, interacts with the luminal region of ERN1/IRE1 and selectively recruits HSPA5/BiP: HSPA5/BiP disrupts the dimerization of the active ERN1/IRE1 luminal region, thereby inactivating ERN1/IRE1 (By similarity). Also involved in endoplasmic reticulum-associated degradation (ERAD) of misfolded proteins. Required for survival of B-cell progenitors and normal antibody production (By similarity).</text>
</comment>
<comment type="subunit">
    <text evidence="1 2">Interacts with HSPA5/BiP; interaction is direct (By similarity). Interacts with ERN1/IRE1 (via the luminal region) (By similarity). Interacts with DERL1 (By similarity).</text>
</comment>
<comment type="subcellular location">
    <subcellularLocation>
        <location evidence="2">Endoplasmic reticulum lumen</location>
    </subcellularLocation>
</comment>
<comment type="domain">
    <text evidence="2">The J domain stimulates the ATPase activity of HSPA5/BiP, while the divergent targeting domain is required for efficient substrate recognition by HSPA5/BiP. The divergent targeting domain specifically recognizes and binds to aggregation-prone sequences.</text>
</comment>
<comment type="caution">
    <text evidence="8">Was initially reported to localize in the nucleus (PubMed:11525638). However, it was later shown to localize in the endoplasmic reticulum lumen.</text>
</comment>
<protein>
    <recommendedName>
        <fullName evidence="7">DnaJ homolog subfamily B member 9</fullName>
    </recommendedName>
    <alternativeName>
        <fullName evidence="2">Endoplasmic reticulum DNA J domain-containing protein 4</fullName>
        <shortName evidence="2">ER-resident protein ERdj4</shortName>
        <shortName evidence="2">ERdj4</shortName>
    </alternativeName>
    <alternativeName>
        <fullName evidence="6">Microvascular endothelial differentiation gene 1 protein</fullName>
        <shortName evidence="6">Mdg-1</shortName>
    </alternativeName>
</protein>
<sequence length="222" mass="25717">MATPQSVFVFAICILMITELILASKNYYDILGVPKSASERQIKKAFHKLAMKYHPDKNKSPDAEAKFREIAEAYETLSDANRRKEYDIIGHSAFTNGKGQRSNGSPFEQSFNFNFDDLFKDFNLFGQNQNTRSKKHFENHFQTRQDGSSRQRHHFQEFSFGGGLFDDMFEDMEKMFSFSGFDSTNRRTVQTENRFHGSSKHCRTVTQRRGNMVTTYTDCSGQ</sequence>
<proteinExistence type="evidence at transcript level"/>